<feature type="chain" id="PRO_0000322340" description="Small ribosomal subunit protein uS4">
    <location>
        <begin position="1"/>
        <end position="203"/>
    </location>
</feature>
<feature type="domain" description="S4 RNA-binding" evidence="1">
    <location>
        <begin position="93"/>
        <end position="156"/>
    </location>
</feature>
<reference key="1">
    <citation type="journal article" date="2007" name="PLoS ONE">
        <title>A glimpse of streptococcal toxic shock syndrome from comparative genomics of S. suis 2 Chinese isolates.</title>
        <authorList>
            <person name="Chen C."/>
            <person name="Tang J."/>
            <person name="Dong W."/>
            <person name="Wang C."/>
            <person name="Feng Y."/>
            <person name="Wang J."/>
            <person name="Zheng F."/>
            <person name="Pan X."/>
            <person name="Liu D."/>
            <person name="Li M."/>
            <person name="Song Y."/>
            <person name="Zhu X."/>
            <person name="Sun H."/>
            <person name="Feng T."/>
            <person name="Guo Z."/>
            <person name="Ju A."/>
            <person name="Ge J."/>
            <person name="Dong Y."/>
            <person name="Sun W."/>
            <person name="Jiang Y."/>
            <person name="Wang J."/>
            <person name="Yan J."/>
            <person name="Yang H."/>
            <person name="Wang X."/>
            <person name="Gao G.F."/>
            <person name="Yang R."/>
            <person name="Wang J."/>
            <person name="Yu J."/>
        </authorList>
    </citation>
    <scope>NUCLEOTIDE SEQUENCE [LARGE SCALE GENOMIC DNA]</scope>
    <source>
        <strain>05ZYH33</strain>
    </source>
</reference>
<comment type="function">
    <text evidence="1">One of the primary rRNA binding proteins, it binds directly to 16S rRNA where it nucleates assembly of the body of the 30S subunit.</text>
</comment>
<comment type="function">
    <text evidence="1">With S5 and S12 plays an important role in translational accuracy.</text>
</comment>
<comment type="subunit">
    <text evidence="1">Part of the 30S ribosomal subunit. Contacts protein S5. The interaction surface between S4 and S5 is involved in control of translational fidelity.</text>
</comment>
<comment type="similarity">
    <text evidence="1">Belongs to the universal ribosomal protein uS4 family.</text>
</comment>
<evidence type="ECO:0000255" key="1">
    <source>
        <dbReference type="HAMAP-Rule" id="MF_01306"/>
    </source>
</evidence>
<evidence type="ECO:0000305" key="2"/>
<keyword id="KW-0687">Ribonucleoprotein</keyword>
<keyword id="KW-0689">Ribosomal protein</keyword>
<keyword id="KW-0694">RNA-binding</keyword>
<keyword id="KW-0699">rRNA-binding</keyword>
<sequence>MSRYTGPSWKQARRLGLSLTGTGKELARRNYVPGQHGPNNRSKLSEYGLQLAEKQKLRFSYGLGEKQFRNLFVQATKIKQGTLGFNFMLLLERRLDNVVYRLGLATTRRQARQFVNHGHILVDGKRVDIPSYRVEVGQVISVREKSIKVPAILEAVEATLGRPAFVSFDAEKLEGSLTRLPERDEINPEINEALVVEFYNKML</sequence>
<proteinExistence type="inferred from homology"/>
<dbReference type="EMBL" id="CP000407">
    <property type="protein sequence ID" value="ABP91122.1"/>
    <property type="molecule type" value="Genomic_DNA"/>
</dbReference>
<dbReference type="SMR" id="A4VYD3"/>
<dbReference type="STRING" id="391295.SSU05_2156"/>
<dbReference type="KEGG" id="ssu:SSU05_2156"/>
<dbReference type="eggNOG" id="COG0522">
    <property type="taxonomic scope" value="Bacteria"/>
</dbReference>
<dbReference type="HOGENOM" id="CLU_092403_0_1_9"/>
<dbReference type="GO" id="GO:0015935">
    <property type="term" value="C:small ribosomal subunit"/>
    <property type="evidence" value="ECO:0007669"/>
    <property type="project" value="InterPro"/>
</dbReference>
<dbReference type="GO" id="GO:0019843">
    <property type="term" value="F:rRNA binding"/>
    <property type="evidence" value="ECO:0007669"/>
    <property type="project" value="UniProtKB-UniRule"/>
</dbReference>
<dbReference type="GO" id="GO:0003735">
    <property type="term" value="F:structural constituent of ribosome"/>
    <property type="evidence" value="ECO:0007669"/>
    <property type="project" value="InterPro"/>
</dbReference>
<dbReference type="GO" id="GO:0042274">
    <property type="term" value="P:ribosomal small subunit biogenesis"/>
    <property type="evidence" value="ECO:0007669"/>
    <property type="project" value="TreeGrafter"/>
</dbReference>
<dbReference type="GO" id="GO:0006412">
    <property type="term" value="P:translation"/>
    <property type="evidence" value="ECO:0007669"/>
    <property type="project" value="UniProtKB-UniRule"/>
</dbReference>
<dbReference type="CDD" id="cd00165">
    <property type="entry name" value="S4"/>
    <property type="match status" value="1"/>
</dbReference>
<dbReference type="FunFam" id="3.10.290.10:FF:000001">
    <property type="entry name" value="30S ribosomal protein S4"/>
    <property type="match status" value="1"/>
</dbReference>
<dbReference type="Gene3D" id="1.10.1050.10">
    <property type="entry name" value="Ribosomal Protein S4 Delta 41, Chain A, domain 1"/>
    <property type="match status" value="1"/>
</dbReference>
<dbReference type="Gene3D" id="3.10.290.10">
    <property type="entry name" value="RNA-binding S4 domain"/>
    <property type="match status" value="1"/>
</dbReference>
<dbReference type="HAMAP" id="MF_01306_B">
    <property type="entry name" value="Ribosomal_uS4_B"/>
    <property type="match status" value="1"/>
</dbReference>
<dbReference type="InterPro" id="IPR022801">
    <property type="entry name" value="Ribosomal_uS4"/>
</dbReference>
<dbReference type="InterPro" id="IPR005709">
    <property type="entry name" value="Ribosomal_uS4_bac-type"/>
</dbReference>
<dbReference type="InterPro" id="IPR018079">
    <property type="entry name" value="Ribosomal_uS4_CS"/>
</dbReference>
<dbReference type="InterPro" id="IPR001912">
    <property type="entry name" value="Ribosomal_uS4_N"/>
</dbReference>
<dbReference type="InterPro" id="IPR002942">
    <property type="entry name" value="S4_RNA-bd"/>
</dbReference>
<dbReference type="InterPro" id="IPR036986">
    <property type="entry name" value="S4_RNA-bd_sf"/>
</dbReference>
<dbReference type="NCBIfam" id="NF003717">
    <property type="entry name" value="PRK05327.1"/>
    <property type="match status" value="1"/>
</dbReference>
<dbReference type="NCBIfam" id="TIGR01017">
    <property type="entry name" value="rpsD_bact"/>
    <property type="match status" value="1"/>
</dbReference>
<dbReference type="PANTHER" id="PTHR11831">
    <property type="entry name" value="30S 40S RIBOSOMAL PROTEIN"/>
    <property type="match status" value="1"/>
</dbReference>
<dbReference type="PANTHER" id="PTHR11831:SF4">
    <property type="entry name" value="SMALL RIBOSOMAL SUBUNIT PROTEIN US4M"/>
    <property type="match status" value="1"/>
</dbReference>
<dbReference type="Pfam" id="PF00163">
    <property type="entry name" value="Ribosomal_S4"/>
    <property type="match status" value="1"/>
</dbReference>
<dbReference type="Pfam" id="PF01479">
    <property type="entry name" value="S4"/>
    <property type="match status" value="1"/>
</dbReference>
<dbReference type="SMART" id="SM01390">
    <property type="entry name" value="Ribosomal_S4"/>
    <property type="match status" value="1"/>
</dbReference>
<dbReference type="SMART" id="SM00363">
    <property type="entry name" value="S4"/>
    <property type="match status" value="1"/>
</dbReference>
<dbReference type="SUPFAM" id="SSF55174">
    <property type="entry name" value="Alpha-L RNA-binding motif"/>
    <property type="match status" value="1"/>
</dbReference>
<dbReference type="PROSITE" id="PS00632">
    <property type="entry name" value="RIBOSOMAL_S4"/>
    <property type="match status" value="1"/>
</dbReference>
<dbReference type="PROSITE" id="PS50889">
    <property type="entry name" value="S4"/>
    <property type="match status" value="1"/>
</dbReference>
<gene>
    <name evidence="1" type="primary">rpsD</name>
    <name type="ordered locus">SSU05_2156</name>
</gene>
<organism>
    <name type="scientific">Streptococcus suis (strain 05ZYH33)</name>
    <dbReference type="NCBI Taxonomy" id="391295"/>
    <lineage>
        <taxon>Bacteria</taxon>
        <taxon>Bacillati</taxon>
        <taxon>Bacillota</taxon>
        <taxon>Bacilli</taxon>
        <taxon>Lactobacillales</taxon>
        <taxon>Streptococcaceae</taxon>
        <taxon>Streptococcus</taxon>
    </lineage>
</organism>
<accession>A4VYD3</accession>
<protein>
    <recommendedName>
        <fullName evidence="1">Small ribosomal subunit protein uS4</fullName>
    </recommendedName>
    <alternativeName>
        <fullName evidence="2">30S ribosomal protein S4</fullName>
    </alternativeName>
</protein>
<name>RS4_STRSY</name>